<accession>Q1JMI8</accession>
<dbReference type="EMBL" id="CP000259">
    <property type="protein sequence ID" value="ABF31824.1"/>
    <property type="molecule type" value="Genomic_DNA"/>
</dbReference>
<dbReference type="RefSeq" id="WP_002985233.1">
    <property type="nucleotide sequence ID" value="NC_008021.1"/>
</dbReference>
<dbReference type="SMR" id="Q1JMI8"/>
<dbReference type="KEGG" id="spk:MGAS9429_Spy0636"/>
<dbReference type="HOGENOM" id="CLU_084338_1_0_9"/>
<dbReference type="Proteomes" id="UP000002433">
    <property type="component" value="Chromosome"/>
</dbReference>
<dbReference type="GO" id="GO:0005886">
    <property type="term" value="C:plasma membrane"/>
    <property type="evidence" value="ECO:0007669"/>
    <property type="project" value="UniProtKB-SubCell"/>
</dbReference>
<dbReference type="GO" id="GO:0045259">
    <property type="term" value="C:proton-transporting ATP synthase complex"/>
    <property type="evidence" value="ECO:0007669"/>
    <property type="project" value="UniProtKB-KW"/>
</dbReference>
<dbReference type="GO" id="GO:0005524">
    <property type="term" value="F:ATP binding"/>
    <property type="evidence" value="ECO:0007669"/>
    <property type="project" value="UniProtKB-UniRule"/>
</dbReference>
<dbReference type="GO" id="GO:0046933">
    <property type="term" value="F:proton-transporting ATP synthase activity, rotational mechanism"/>
    <property type="evidence" value="ECO:0007669"/>
    <property type="project" value="UniProtKB-UniRule"/>
</dbReference>
<dbReference type="CDD" id="cd12152">
    <property type="entry name" value="F1-ATPase_delta"/>
    <property type="match status" value="1"/>
</dbReference>
<dbReference type="Gene3D" id="1.20.5.440">
    <property type="entry name" value="ATP synthase delta/epsilon subunit, C-terminal domain"/>
    <property type="match status" value="1"/>
</dbReference>
<dbReference type="Gene3D" id="2.60.15.10">
    <property type="entry name" value="F0F1 ATP synthase delta/epsilon subunit, N-terminal"/>
    <property type="match status" value="1"/>
</dbReference>
<dbReference type="HAMAP" id="MF_00530">
    <property type="entry name" value="ATP_synth_epsil_bac"/>
    <property type="match status" value="1"/>
</dbReference>
<dbReference type="InterPro" id="IPR001469">
    <property type="entry name" value="ATP_synth_F1_dsu/esu"/>
</dbReference>
<dbReference type="InterPro" id="IPR020546">
    <property type="entry name" value="ATP_synth_F1_dsu/esu_N"/>
</dbReference>
<dbReference type="InterPro" id="IPR020547">
    <property type="entry name" value="ATP_synth_F1_esu_C"/>
</dbReference>
<dbReference type="InterPro" id="IPR036771">
    <property type="entry name" value="ATPsynth_dsu/esu_N"/>
</dbReference>
<dbReference type="NCBIfam" id="TIGR01216">
    <property type="entry name" value="ATP_synt_epsi"/>
    <property type="match status" value="1"/>
</dbReference>
<dbReference type="NCBIfam" id="NF001846">
    <property type="entry name" value="PRK00571.1-3"/>
    <property type="match status" value="1"/>
</dbReference>
<dbReference type="PANTHER" id="PTHR13822">
    <property type="entry name" value="ATP SYNTHASE DELTA/EPSILON CHAIN"/>
    <property type="match status" value="1"/>
</dbReference>
<dbReference type="PANTHER" id="PTHR13822:SF10">
    <property type="entry name" value="ATP SYNTHASE EPSILON CHAIN, CHLOROPLASTIC"/>
    <property type="match status" value="1"/>
</dbReference>
<dbReference type="Pfam" id="PF00401">
    <property type="entry name" value="ATP-synt_DE"/>
    <property type="match status" value="1"/>
</dbReference>
<dbReference type="Pfam" id="PF02823">
    <property type="entry name" value="ATP-synt_DE_N"/>
    <property type="match status" value="1"/>
</dbReference>
<dbReference type="SUPFAM" id="SSF51344">
    <property type="entry name" value="Epsilon subunit of F1F0-ATP synthase N-terminal domain"/>
    <property type="match status" value="1"/>
</dbReference>
<protein>
    <recommendedName>
        <fullName evidence="1">ATP synthase epsilon chain</fullName>
    </recommendedName>
    <alternativeName>
        <fullName evidence="1">ATP synthase F1 sector epsilon subunit</fullName>
    </alternativeName>
    <alternativeName>
        <fullName evidence="1">F-ATPase epsilon subunit</fullName>
    </alternativeName>
</protein>
<gene>
    <name evidence="1" type="primary">atpC</name>
    <name type="ordered locus">MGAS9429_Spy0636</name>
</gene>
<feature type="chain" id="PRO_0000265903" description="ATP synthase epsilon chain">
    <location>
        <begin position="1"/>
        <end position="138"/>
    </location>
</feature>
<organism>
    <name type="scientific">Streptococcus pyogenes serotype M12 (strain MGAS9429)</name>
    <dbReference type="NCBI Taxonomy" id="370551"/>
    <lineage>
        <taxon>Bacteria</taxon>
        <taxon>Bacillati</taxon>
        <taxon>Bacillota</taxon>
        <taxon>Bacilli</taxon>
        <taxon>Lactobacillales</taxon>
        <taxon>Streptococcaceae</taxon>
        <taxon>Streptococcus</taxon>
    </lineage>
</organism>
<name>ATPE_STRPC</name>
<sequence length="138" mass="15496">MTQMTVQVVTPDGIKYDHHAKCISVTTPDGEMGILPNHINLIAPLQVHEMKIRRGGEDEKVDWIAINGGIIEIKDNVVTVVADSAERDRDIDVSRAERAKLRAEREIAQAETTHNIDEVRRAKVALRRALNRINVSKK</sequence>
<keyword id="KW-0066">ATP synthesis</keyword>
<keyword id="KW-1003">Cell membrane</keyword>
<keyword id="KW-0139">CF(1)</keyword>
<keyword id="KW-0375">Hydrogen ion transport</keyword>
<keyword id="KW-0406">Ion transport</keyword>
<keyword id="KW-0472">Membrane</keyword>
<keyword id="KW-0813">Transport</keyword>
<proteinExistence type="inferred from homology"/>
<reference key="1">
    <citation type="journal article" date="2006" name="Proc. Natl. Acad. Sci. U.S.A.">
        <title>Molecular genetic anatomy of inter- and intraserotype variation in the human bacterial pathogen group A Streptococcus.</title>
        <authorList>
            <person name="Beres S.B."/>
            <person name="Richter E.W."/>
            <person name="Nagiec M.J."/>
            <person name="Sumby P."/>
            <person name="Porcella S.F."/>
            <person name="DeLeo F.R."/>
            <person name="Musser J.M."/>
        </authorList>
    </citation>
    <scope>NUCLEOTIDE SEQUENCE [LARGE SCALE GENOMIC DNA]</scope>
    <source>
        <strain>MGAS9429</strain>
    </source>
</reference>
<evidence type="ECO:0000255" key="1">
    <source>
        <dbReference type="HAMAP-Rule" id="MF_00530"/>
    </source>
</evidence>
<comment type="function">
    <text evidence="1">Produces ATP from ADP in the presence of a proton gradient across the membrane.</text>
</comment>
<comment type="subunit">
    <text>F-type ATPases have 2 components, CF(1) - the catalytic core - and CF(0) - the membrane proton channel. CF(1) has five subunits: alpha(3), beta(3), gamma(1), delta(1), epsilon(1). CF(0) has three main subunits: a, b and c.</text>
</comment>
<comment type="subcellular location">
    <subcellularLocation>
        <location evidence="1">Cell membrane</location>
        <topology evidence="1">Peripheral membrane protein</topology>
    </subcellularLocation>
</comment>
<comment type="similarity">
    <text evidence="1">Belongs to the ATPase epsilon chain family.</text>
</comment>